<proteinExistence type="inferred from homology"/>
<organism>
    <name type="scientific">Escherichia coli O8 (strain IAI1)</name>
    <dbReference type="NCBI Taxonomy" id="585034"/>
    <lineage>
        <taxon>Bacteria</taxon>
        <taxon>Pseudomonadati</taxon>
        <taxon>Pseudomonadota</taxon>
        <taxon>Gammaproteobacteria</taxon>
        <taxon>Enterobacterales</taxon>
        <taxon>Enterobacteriaceae</taxon>
        <taxon>Escherichia</taxon>
    </lineage>
</organism>
<protein>
    <recommendedName>
        <fullName evidence="1">Polyribonucleotide nucleotidyltransferase</fullName>
        <ecNumber evidence="1">2.7.7.8</ecNumber>
    </recommendedName>
    <alternativeName>
        <fullName evidence="1">Polynucleotide phosphorylase</fullName>
        <shortName evidence="1">PNPase</shortName>
    </alternativeName>
</protein>
<accession>B7M072</accession>
<reference key="1">
    <citation type="journal article" date="2009" name="PLoS Genet.">
        <title>Organised genome dynamics in the Escherichia coli species results in highly diverse adaptive paths.</title>
        <authorList>
            <person name="Touchon M."/>
            <person name="Hoede C."/>
            <person name="Tenaillon O."/>
            <person name="Barbe V."/>
            <person name="Baeriswyl S."/>
            <person name="Bidet P."/>
            <person name="Bingen E."/>
            <person name="Bonacorsi S."/>
            <person name="Bouchier C."/>
            <person name="Bouvet O."/>
            <person name="Calteau A."/>
            <person name="Chiapello H."/>
            <person name="Clermont O."/>
            <person name="Cruveiller S."/>
            <person name="Danchin A."/>
            <person name="Diard M."/>
            <person name="Dossat C."/>
            <person name="Karoui M.E."/>
            <person name="Frapy E."/>
            <person name="Garry L."/>
            <person name="Ghigo J.M."/>
            <person name="Gilles A.M."/>
            <person name="Johnson J."/>
            <person name="Le Bouguenec C."/>
            <person name="Lescat M."/>
            <person name="Mangenot S."/>
            <person name="Martinez-Jehanne V."/>
            <person name="Matic I."/>
            <person name="Nassif X."/>
            <person name="Oztas S."/>
            <person name="Petit M.A."/>
            <person name="Pichon C."/>
            <person name="Rouy Z."/>
            <person name="Ruf C.S."/>
            <person name="Schneider D."/>
            <person name="Tourret J."/>
            <person name="Vacherie B."/>
            <person name="Vallenet D."/>
            <person name="Medigue C."/>
            <person name="Rocha E.P.C."/>
            <person name="Denamur E."/>
        </authorList>
    </citation>
    <scope>NUCLEOTIDE SEQUENCE [LARGE SCALE GENOMIC DNA]</scope>
    <source>
        <strain>IAI1</strain>
    </source>
</reference>
<comment type="function">
    <text evidence="1">Involved in mRNA degradation. Catalyzes the phosphorolysis of single-stranded polyribonucleotides processively in the 3'- to 5'-direction.</text>
</comment>
<comment type="catalytic activity">
    <reaction evidence="1">
        <text>RNA(n+1) + phosphate = RNA(n) + a ribonucleoside 5'-diphosphate</text>
        <dbReference type="Rhea" id="RHEA:22096"/>
        <dbReference type="Rhea" id="RHEA-COMP:14527"/>
        <dbReference type="Rhea" id="RHEA-COMP:17342"/>
        <dbReference type="ChEBI" id="CHEBI:43474"/>
        <dbReference type="ChEBI" id="CHEBI:57930"/>
        <dbReference type="ChEBI" id="CHEBI:140395"/>
        <dbReference type="EC" id="2.7.7.8"/>
    </reaction>
</comment>
<comment type="cofactor">
    <cofactor evidence="1">
        <name>Mg(2+)</name>
        <dbReference type="ChEBI" id="CHEBI:18420"/>
    </cofactor>
</comment>
<comment type="subunit">
    <text evidence="1">Component of the RNA degradosome, which is a multiprotein complex involved in RNA processing and mRNA degradation.</text>
</comment>
<comment type="subcellular location">
    <subcellularLocation>
        <location evidence="1">Cytoplasm</location>
    </subcellularLocation>
</comment>
<comment type="similarity">
    <text evidence="1">Belongs to the polyribonucleotide nucleotidyltransferase family.</text>
</comment>
<comment type="sequence caution" evidence="3">
    <conflict type="erroneous initiation">
        <sequence resource="EMBL-CDS" id="CAR00128"/>
    </conflict>
</comment>
<name>PNP_ECO8A</name>
<gene>
    <name evidence="1" type="primary">pnp</name>
    <name type="ordered locus">ECIAI1_3314</name>
</gene>
<feature type="chain" id="PRO_0000381893" description="Polyribonucleotide nucleotidyltransferase">
    <location>
        <begin position="1"/>
        <end position="711"/>
    </location>
</feature>
<feature type="domain" description="KH" evidence="1">
    <location>
        <begin position="553"/>
        <end position="612"/>
    </location>
</feature>
<feature type="domain" description="S1 motif" evidence="1">
    <location>
        <begin position="622"/>
        <end position="690"/>
    </location>
</feature>
<feature type="region of interest" description="Disordered" evidence="2">
    <location>
        <begin position="689"/>
        <end position="711"/>
    </location>
</feature>
<feature type="compositionally biased region" description="Low complexity" evidence="2">
    <location>
        <begin position="694"/>
        <end position="711"/>
    </location>
</feature>
<feature type="binding site" evidence="1">
    <location>
        <position position="486"/>
    </location>
    <ligand>
        <name>Mg(2+)</name>
        <dbReference type="ChEBI" id="CHEBI:18420"/>
    </ligand>
</feature>
<feature type="binding site" evidence="1">
    <location>
        <position position="492"/>
    </location>
    <ligand>
        <name>Mg(2+)</name>
        <dbReference type="ChEBI" id="CHEBI:18420"/>
    </ligand>
</feature>
<keyword id="KW-0963">Cytoplasm</keyword>
<keyword id="KW-0460">Magnesium</keyword>
<keyword id="KW-0479">Metal-binding</keyword>
<keyword id="KW-0548">Nucleotidyltransferase</keyword>
<keyword id="KW-0694">RNA-binding</keyword>
<keyword id="KW-0808">Transferase</keyword>
<evidence type="ECO:0000255" key="1">
    <source>
        <dbReference type="HAMAP-Rule" id="MF_01595"/>
    </source>
</evidence>
<evidence type="ECO:0000256" key="2">
    <source>
        <dbReference type="SAM" id="MobiDB-lite"/>
    </source>
</evidence>
<evidence type="ECO:0000305" key="3"/>
<dbReference type="EC" id="2.7.7.8" evidence="1"/>
<dbReference type="EMBL" id="CU928160">
    <property type="protein sequence ID" value="CAR00128.1"/>
    <property type="status" value="ALT_INIT"/>
    <property type="molecule type" value="Genomic_DNA"/>
</dbReference>
<dbReference type="RefSeq" id="WP_001356006.1">
    <property type="nucleotide sequence ID" value="NC_011741.1"/>
</dbReference>
<dbReference type="SMR" id="B7M072"/>
<dbReference type="KEGG" id="ecr:ECIAI1_3314"/>
<dbReference type="HOGENOM" id="CLU_004217_2_2_6"/>
<dbReference type="GO" id="GO:0005829">
    <property type="term" value="C:cytosol"/>
    <property type="evidence" value="ECO:0007669"/>
    <property type="project" value="TreeGrafter"/>
</dbReference>
<dbReference type="GO" id="GO:0000175">
    <property type="term" value="F:3'-5'-RNA exonuclease activity"/>
    <property type="evidence" value="ECO:0007669"/>
    <property type="project" value="TreeGrafter"/>
</dbReference>
<dbReference type="GO" id="GO:0000287">
    <property type="term" value="F:magnesium ion binding"/>
    <property type="evidence" value="ECO:0007669"/>
    <property type="project" value="UniProtKB-UniRule"/>
</dbReference>
<dbReference type="GO" id="GO:0004654">
    <property type="term" value="F:polyribonucleotide nucleotidyltransferase activity"/>
    <property type="evidence" value="ECO:0007669"/>
    <property type="project" value="UniProtKB-UniRule"/>
</dbReference>
<dbReference type="GO" id="GO:0003723">
    <property type="term" value="F:RNA binding"/>
    <property type="evidence" value="ECO:0007669"/>
    <property type="project" value="UniProtKB-UniRule"/>
</dbReference>
<dbReference type="GO" id="GO:0006402">
    <property type="term" value="P:mRNA catabolic process"/>
    <property type="evidence" value="ECO:0007669"/>
    <property type="project" value="UniProtKB-UniRule"/>
</dbReference>
<dbReference type="GO" id="GO:0006396">
    <property type="term" value="P:RNA processing"/>
    <property type="evidence" value="ECO:0007669"/>
    <property type="project" value="InterPro"/>
</dbReference>
<dbReference type="CDD" id="cd02393">
    <property type="entry name" value="KH-I_PNPase"/>
    <property type="match status" value="1"/>
</dbReference>
<dbReference type="CDD" id="cd11363">
    <property type="entry name" value="RNase_PH_PNPase_1"/>
    <property type="match status" value="1"/>
</dbReference>
<dbReference type="CDD" id="cd11364">
    <property type="entry name" value="RNase_PH_PNPase_2"/>
    <property type="match status" value="1"/>
</dbReference>
<dbReference type="CDD" id="cd04472">
    <property type="entry name" value="S1_PNPase"/>
    <property type="match status" value="1"/>
</dbReference>
<dbReference type="FunFam" id="2.40.50.140:FF:000023">
    <property type="entry name" value="Polyribonucleotide nucleotidyltransferase"/>
    <property type="match status" value="1"/>
</dbReference>
<dbReference type="FunFam" id="3.30.1370.10:FF:000001">
    <property type="entry name" value="Polyribonucleotide nucleotidyltransferase"/>
    <property type="match status" value="1"/>
</dbReference>
<dbReference type="FunFam" id="3.30.230.70:FF:000001">
    <property type="entry name" value="Polyribonucleotide nucleotidyltransferase"/>
    <property type="match status" value="1"/>
</dbReference>
<dbReference type="FunFam" id="3.30.230.70:FF:000002">
    <property type="entry name" value="Polyribonucleotide nucleotidyltransferase"/>
    <property type="match status" value="1"/>
</dbReference>
<dbReference type="Gene3D" id="3.30.230.70">
    <property type="entry name" value="GHMP Kinase, N-terminal domain"/>
    <property type="match status" value="2"/>
</dbReference>
<dbReference type="Gene3D" id="3.30.1370.10">
    <property type="entry name" value="K Homology domain, type 1"/>
    <property type="match status" value="1"/>
</dbReference>
<dbReference type="Gene3D" id="2.40.50.140">
    <property type="entry name" value="Nucleic acid-binding proteins"/>
    <property type="match status" value="1"/>
</dbReference>
<dbReference type="HAMAP" id="MF_01595">
    <property type="entry name" value="PNPase"/>
    <property type="match status" value="1"/>
</dbReference>
<dbReference type="InterPro" id="IPR001247">
    <property type="entry name" value="ExoRNase_PH_dom1"/>
</dbReference>
<dbReference type="InterPro" id="IPR015847">
    <property type="entry name" value="ExoRNase_PH_dom2"/>
</dbReference>
<dbReference type="InterPro" id="IPR036345">
    <property type="entry name" value="ExoRNase_PH_dom2_sf"/>
</dbReference>
<dbReference type="InterPro" id="IPR004087">
    <property type="entry name" value="KH_dom"/>
</dbReference>
<dbReference type="InterPro" id="IPR004088">
    <property type="entry name" value="KH_dom_type_1"/>
</dbReference>
<dbReference type="InterPro" id="IPR036612">
    <property type="entry name" value="KH_dom_type_1_sf"/>
</dbReference>
<dbReference type="InterPro" id="IPR012340">
    <property type="entry name" value="NA-bd_OB-fold"/>
</dbReference>
<dbReference type="InterPro" id="IPR012162">
    <property type="entry name" value="PNPase"/>
</dbReference>
<dbReference type="InterPro" id="IPR027408">
    <property type="entry name" value="PNPase/RNase_PH_dom_sf"/>
</dbReference>
<dbReference type="InterPro" id="IPR015848">
    <property type="entry name" value="PNPase_PH_RNA-bd_bac/org-type"/>
</dbReference>
<dbReference type="InterPro" id="IPR036456">
    <property type="entry name" value="PNPase_PH_RNA-bd_sf"/>
</dbReference>
<dbReference type="InterPro" id="IPR020568">
    <property type="entry name" value="Ribosomal_Su5_D2-typ_SF"/>
</dbReference>
<dbReference type="InterPro" id="IPR003029">
    <property type="entry name" value="S1_domain"/>
</dbReference>
<dbReference type="NCBIfam" id="TIGR03591">
    <property type="entry name" value="polynuc_phos"/>
    <property type="match status" value="1"/>
</dbReference>
<dbReference type="NCBIfam" id="NF008805">
    <property type="entry name" value="PRK11824.1"/>
    <property type="match status" value="1"/>
</dbReference>
<dbReference type="PANTHER" id="PTHR11252">
    <property type="entry name" value="POLYRIBONUCLEOTIDE NUCLEOTIDYLTRANSFERASE"/>
    <property type="match status" value="1"/>
</dbReference>
<dbReference type="PANTHER" id="PTHR11252:SF0">
    <property type="entry name" value="POLYRIBONUCLEOTIDE NUCLEOTIDYLTRANSFERASE 1, MITOCHONDRIAL"/>
    <property type="match status" value="1"/>
</dbReference>
<dbReference type="Pfam" id="PF00013">
    <property type="entry name" value="KH_1"/>
    <property type="match status" value="1"/>
</dbReference>
<dbReference type="Pfam" id="PF03726">
    <property type="entry name" value="PNPase"/>
    <property type="match status" value="1"/>
</dbReference>
<dbReference type="Pfam" id="PF01138">
    <property type="entry name" value="RNase_PH"/>
    <property type="match status" value="2"/>
</dbReference>
<dbReference type="Pfam" id="PF03725">
    <property type="entry name" value="RNase_PH_C"/>
    <property type="match status" value="2"/>
</dbReference>
<dbReference type="Pfam" id="PF00575">
    <property type="entry name" value="S1"/>
    <property type="match status" value="1"/>
</dbReference>
<dbReference type="PIRSF" id="PIRSF005499">
    <property type="entry name" value="PNPase"/>
    <property type="match status" value="1"/>
</dbReference>
<dbReference type="SMART" id="SM00322">
    <property type="entry name" value="KH"/>
    <property type="match status" value="1"/>
</dbReference>
<dbReference type="SMART" id="SM00316">
    <property type="entry name" value="S1"/>
    <property type="match status" value="1"/>
</dbReference>
<dbReference type="SUPFAM" id="SSF54791">
    <property type="entry name" value="Eukaryotic type KH-domain (KH-domain type I)"/>
    <property type="match status" value="1"/>
</dbReference>
<dbReference type="SUPFAM" id="SSF50249">
    <property type="entry name" value="Nucleic acid-binding proteins"/>
    <property type="match status" value="1"/>
</dbReference>
<dbReference type="SUPFAM" id="SSF46915">
    <property type="entry name" value="Polynucleotide phosphorylase/guanosine pentaphosphate synthase (PNPase/GPSI), domain 3"/>
    <property type="match status" value="1"/>
</dbReference>
<dbReference type="SUPFAM" id="SSF55666">
    <property type="entry name" value="Ribonuclease PH domain 2-like"/>
    <property type="match status" value="2"/>
</dbReference>
<dbReference type="SUPFAM" id="SSF54211">
    <property type="entry name" value="Ribosomal protein S5 domain 2-like"/>
    <property type="match status" value="2"/>
</dbReference>
<dbReference type="PROSITE" id="PS50084">
    <property type="entry name" value="KH_TYPE_1"/>
    <property type="match status" value="1"/>
</dbReference>
<dbReference type="PROSITE" id="PS50126">
    <property type="entry name" value="S1"/>
    <property type="match status" value="1"/>
</dbReference>
<sequence length="711" mass="77115">MLNPIVRKFQYGQHTVTLETGMMARQATAAVMVSMDDTAVFVTVVGQKKAKPGQDFFPLTVNYQERTYAAGRIPGSFFRREGRPSEGETLIARLIDRPIRPLFPEGFVNEVQVIATVVSVNPQVNPDIVAMIGASAALSLSGIPFNGPIGAARVGYINDQYVLNPTQDELKESKLDLVVAGTEAAVLMVESEAELLSEDQMLGAVVFGHEQQQVVIQNINELVKEAGKPRWDWQPEPVNEALNARVAALAEARLSDAYRITDKQERYAQVDVIKSETIATLLAEDENLDENELGEILHAIEKNVVRSRVLAGEPRIDGREKDMIRGLDVRTGVLPRTHGSALFTRGETQALVTATLGTARDAQVLDELMGERTDTFLFHYNFPPYSVGETGMVGSPKRREIGHGRLAKRGVLAVMPDMDKFPYTVRVVSEITESNGSSSMASVCGASLALMDAGVPIKAAVAGIAMGLVKEGDNYVVLSDILGDEDHLGDMDFKVAGSRDGISALQMDIKIEGITKEIMQVALNQAKGARLHILGVMEQAINAPRGDISEFAPRIHTIKINPDKIKDVIGKGGSVIRALTEETGTTIEIEDDGTVKIAATDGEKAKHAIRRIEEITAEIEVGRVYTGKVTRIVDFGAFVAIGGGKEGLVHISQIADKRVEKVTDYLQMGQEVPVKVLEVDRQGRIRLSIKEATEQSQPAAAPEAPAAEQGE</sequence>